<name>RNH2_LIGS1</name>
<sequence length="255" mass="28818">MEKLTIAQIKKMLTEEISSEQLAELKLDERKGVQLAIKSYEKRLKKIENEKLEFQNRLKIERDLWDKGIEYIAGVDEVGRGPLAGPVVTAAVILPHDFDVFEVNDSKQLSEKKREELYKKILEKAVAVSVGLSDNNLIDEVNIYEATRLAMKQAIESLNITPQKIIVDAMTIDTKIPQLRLIKGDAKSASVAAASIVAKVTRDHLMQFYARIYPGYGFEKNDGYGTKQHLEGLENKGVTPIHRQSFEPVKKILLK</sequence>
<evidence type="ECO:0000255" key="1">
    <source>
        <dbReference type="HAMAP-Rule" id="MF_00052"/>
    </source>
</evidence>
<evidence type="ECO:0000255" key="2">
    <source>
        <dbReference type="PROSITE-ProRule" id="PRU01319"/>
    </source>
</evidence>
<proteinExistence type="inferred from homology"/>
<gene>
    <name evidence="1" type="primary">rnhB</name>
    <name type="ordered locus">LSL_0718</name>
</gene>
<reference key="1">
    <citation type="journal article" date="2006" name="Proc. Natl. Acad. Sci. U.S.A.">
        <title>Multireplicon genome architecture of Lactobacillus salivarius.</title>
        <authorList>
            <person name="Claesson M.J."/>
            <person name="Li Y."/>
            <person name="Leahy S."/>
            <person name="Canchaya C."/>
            <person name="van Pijkeren J.P."/>
            <person name="Cerdeno-Tarraga A.M."/>
            <person name="Parkhill J."/>
            <person name="Flynn S."/>
            <person name="O'Sullivan G.C."/>
            <person name="Collins J.K."/>
            <person name="Higgins D."/>
            <person name="Shanahan F."/>
            <person name="Fitzgerald G.F."/>
            <person name="van Sinderen D."/>
            <person name="O'Toole P.W."/>
        </authorList>
    </citation>
    <scope>NUCLEOTIDE SEQUENCE [LARGE SCALE GENOMIC DNA]</scope>
    <source>
        <strain>UCC118</strain>
    </source>
</reference>
<keyword id="KW-0963">Cytoplasm</keyword>
<keyword id="KW-0255">Endonuclease</keyword>
<keyword id="KW-0378">Hydrolase</keyword>
<keyword id="KW-0464">Manganese</keyword>
<keyword id="KW-0479">Metal-binding</keyword>
<keyword id="KW-0540">Nuclease</keyword>
<keyword id="KW-1185">Reference proteome</keyword>
<dbReference type="EC" id="3.1.26.4" evidence="1"/>
<dbReference type="EMBL" id="CP000233">
    <property type="protein sequence ID" value="ABD99528.1"/>
    <property type="molecule type" value="Genomic_DNA"/>
</dbReference>
<dbReference type="RefSeq" id="WP_003707884.1">
    <property type="nucleotide sequence ID" value="NC_007929.1"/>
</dbReference>
<dbReference type="RefSeq" id="YP_535611.1">
    <property type="nucleotide sequence ID" value="NC_007929.1"/>
</dbReference>
<dbReference type="SMR" id="Q1WU07"/>
<dbReference type="STRING" id="362948.LSL_0718"/>
<dbReference type="KEGG" id="lsl:LSL_0718"/>
<dbReference type="PATRIC" id="fig|362948.14.peg.797"/>
<dbReference type="HOGENOM" id="CLU_036532_2_1_9"/>
<dbReference type="OrthoDB" id="9803420at2"/>
<dbReference type="Proteomes" id="UP000006559">
    <property type="component" value="Chromosome"/>
</dbReference>
<dbReference type="GO" id="GO:0005737">
    <property type="term" value="C:cytoplasm"/>
    <property type="evidence" value="ECO:0007669"/>
    <property type="project" value="UniProtKB-SubCell"/>
</dbReference>
<dbReference type="GO" id="GO:0032299">
    <property type="term" value="C:ribonuclease H2 complex"/>
    <property type="evidence" value="ECO:0007669"/>
    <property type="project" value="TreeGrafter"/>
</dbReference>
<dbReference type="GO" id="GO:0030145">
    <property type="term" value="F:manganese ion binding"/>
    <property type="evidence" value="ECO:0007669"/>
    <property type="project" value="UniProtKB-UniRule"/>
</dbReference>
<dbReference type="GO" id="GO:0003723">
    <property type="term" value="F:RNA binding"/>
    <property type="evidence" value="ECO:0007669"/>
    <property type="project" value="InterPro"/>
</dbReference>
<dbReference type="GO" id="GO:0004523">
    <property type="term" value="F:RNA-DNA hybrid ribonuclease activity"/>
    <property type="evidence" value="ECO:0007669"/>
    <property type="project" value="UniProtKB-UniRule"/>
</dbReference>
<dbReference type="GO" id="GO:0043137">
    <property type="term" value="P:DNA replication, removal of RNA primer"/>
    <property type="evidence" value="ECO:0007669"/>
    <property type="project" value="TreeGrafter"/>
</dbReference>
<dbReference type="GO" id="GO:0006298">
    <property type="term" value="P:mismatch repair"/>
    <property type="evidence" value="ECO:0007669"/>
    <property type="project" value="TreeGrafter"/>
</dbReference>
<dbReference type="CDD" id="cd07182">
    <property type="entry name" value="RNase_HII_bacteria_HII_like"/>
    <property type="match status" value="1"/>
</dbReference>
<dbReference type="FunFam" id="3.30.420.10:FF:000006">
    <property type="entry name" value="Ribonuclease HII"/>
    <property type="match status" value="1"/>
</dbReference>
<dbReference type="Gene3D" id="3.30.420.10">
    <property type="entry name" value="Ribonuclease H-like superfamily/Ribonuclease H"/>
    <property type="match status" value="1"/>
</dbReference>
<dbReference type="HAMAP" id="MF_00052_B">
    <property type="entry name" value="RNase_HII_B"/>
    <property type="match status" value="1"/>
</dbReference>
<dbReference type="InterPro" id="IPR022898">
    <property type="entry name" value="RNase_HII"/>
</dbReference>
<dbReference type="InterPro" id="IPR001352">
    <property type="entry name" value="RNase_HII/HIII"/>
</dbReference>
<dbReference type="InterPro" id="IPR024567">
    <property type="entry name" value="RNase_HII/HIII_dom"/>
</dbReference>
<dbReference type="InterPro" id="IPR012337">
    <property type="entry name" value="RNaseH-like_sf"/>
</dbReference>
<dbReference type="InterPro" id="IPR036397">
    <property type="entry name" value="RNaseH_sf"/>
</dbReference>
<dbReference type="NCBIfam" id="NF000594">
    <property type="entry name" value="PRK00015.1-1"/>
    <property type="match status" value="1"/>
</dbReference>
<dbReference type="NCBIfam" id="NF000595">
    <property type="entry name" value="PRK00015.1-3"/>
    <property type="match status" value="1"/>
</dbReference>
<dbReference type="PANTHER" id="PTHR10954">
    <property type="entry name" value="RIBONUCLEASE H2 SUBUNIT A"/>
    <property type="match status" value="1"/>
</dbReference>
<dbReference type="PANTHER" id="PTHR10954:SF18">
    <property type="entry name" value="RIBONUCLEASE HII"/>
    <property type="match status" value="1"/>
</dbReference>
<dbReference type="Pfam" id="PF01351">
    <property type="entry name" value="RNase_HII"/>
    <property type="match status" value="1"/>
</dbReference>
<dbReference type="SUPFAM" id="SSF53098">
    <property type="entry name" value="Ribonuclease H-like"/>
    <property type="match status" value="1"/>
</dbReference>
<dbReference type="PROSITE" id="PS51975">
    <property type="entry name" value="RNASE_H_2"/>
    <property type="match status" value="1"/>
</dbReference>
<organism>
    <name type="scientific">Ligilactobacillus salivarius (strain UCC118)</name>
    <name type="common">Lactobacillus salivarius</name>
    <dbReference type="NCBI Taxonomy" id="362948"/>
    <lineage>
        <taxon>Bacteria</taxon>
        <taxon>Bacillati</taxon>
        <taxon>Bacillota</taxon>
        <taxon>Bacilli</taxon>
        <taxon>Lactobacillales</taxon>
        <taxon>Lactobacillaceae</taxon>
        <taxon>Ligilactobacillus</taxon>
    </lineage>
</organism>
<accession>Q1WU07</accession>
<feature type="chain" id="PRO_0000334911" description="Ribonuclease HII">
    <location>
        <begin position="1"/>
        <end position="255"/>
    </location>
</feature>
<feature type="domain" description="RNase H type-2" evidence="2">
    <location>
        <begin position="70"/>
        <end position="255"/>
    </location>
</feature>
<feature type="binding site" evidence="1">
    <location>
        <position position="76"/>
    </location>
    <ligand>
        <name>a divalent metal cation</name>
        <dbReference type="ChEBI" id="CHEBI:60240"/>
    </ligand>
</feature>
<feature type="binding site" evidence="1">
    <location>
        <position position="77"/>
    </location>
    <ligand>
        <name>a divalent metal cation</name>
        <dbReference type="ChEBI" id="CHEBI:60240"/>
    </ligand>
</feature>
<feature type="binding site" evidence="1">
    <location>
        <position position="168"/>
    </location>
    <ligand>
        <name>a divalent metal cation</name>
        <dbReference type="ChEBI" id="CHEBI:60240"/>
    </ligand>
</feature>
<protein>
    <recommendedName>
        <fullName evidence="1">Ribonuclease HII</fullName>
        <shortName evidence="1">RNase HII</shortName>
        <ecNumber evidence="1">3.1.26.4</ecNumber>
    </recommendedName>
</protein>
<comment type="function">
    <text evidence="1">Endonuclease that specifically degrades the RNA of RNA-DNA hybrids.</text>
</comment>
<comment type="catalytic activity">
    <reaction evidence="1">
        <text>Endonucleolytic cleavage to 5'-phosphomonoester.</text>
        <dbReference type="EC" id="3.1.26.4"/>
    </reaction>
</comment>
<comment type="cofactor">
    <cofactor evidence="1">
        <name>Mn(2+)</name>
        <dbReference type="ChEBI" id="CHEBI:29035"/>
    </cofactor>
    <cofactor evidence="1">
        <name>Mg(2+)</name>
        <dbReference type="ChEBI" id="CHEBI:18420"/>
    </cofactor>
    <text evidence="1">Manganese or magnesium. Binds 1 divalent metal ion per monomer in the absence of substrate. May bind a second metal ion after substrate binding.</text>
</comment>
<comment type="subcellular location">
    <subcellularLocation>
        <location evidence="1">Cytoplasm</location>
    </subcellularLocation>
</comment>
<comment type="similarity">
    <text evidence="1">Belongs to the RNase HII family.</text>
</comment>